<dbReference type="EC" id="5.4.99.62" evidence="1"/>
<dbReference type="EMBL" id="CP001185">
    <property type="protein sequence ID" value="ACJ75144.1"/>
    <property type="molecule type" value="Genomic_DNA"/>
</dbReference>
<dbReference type="RefSeq" id="WP_012579713.1">
    <property type="nucleotide sequence ID" value="NC_011653.1"/>
</dbReference>
<dbReference type="SMR" id="B7IGD0"/>
<dbReference type="STRING" id="484019.THA_669"/>
<dbReference type="KEGG" id="taf:THA_669"/>
<dbReference type="eggNOG" id="COG1869">
    <property type="taxonomic scope" value="Bacteria"/>
</dbReference>
<dbReference type="HOGENOM" id="CLU_135498_0_0_0"/>
<dbReference type="OrthoDB" id="9805009at2"/>
<dbReference type="UniPathway" id="UPA00916">
    <property type="reaction ID" value="UER00888"/>
</dbReference>
<dbReference type="Proteomes" id="UP000002453">
    <property type="component" value="Chromosome"/>
</dbReference>
<dbReference type="GO" id="GO:0005829">
    <property type="term" value="C:cytosol"/>
    <property type="evidence" value="ECO:0007669"/>
    <property type="project" value="TreeGrafter"/>
</dbReference>
<dbReference type="GO" id="GO:0062193">
    <property type="term" value="F:D-ribose pyranase activity"/>
    <property type="evidence" value="ECO:0007669"/>
    <property type="project" value="UniProtKB-EC"/>
</dbReference>
<dbReference type="GO" id="GO:0016872">
    <property type="term" value="F:intramolecular lyase activity"/>
    <property type="evidence" value="ECO:0007669"/>
    <property type="project" value="UniProtKB-UniRule"/>
</dbReference>
<dbReference type="GO" id="GO:0048029">
    <property type="term" value="F:monosaccharide binding"/>
    <property type="evidence" value="ECO:0007669"/>
    <property type="project" value="InterPro"/>
</dbReference>
<dbReference type="GO" id="GO:0019303">
    <property type="term" value="P:D-ribose catabolic process"/>
    <property type="evidence" value="ECO:0007669"/>
    <property type="project" value="UniProtKB-UniRule"/>
</dbReference>
<dbReference type="Gene3D" id="3.40.1650.10">
    <property type="entry name" value="RbsD-like domain"/>
    <property type="match status" value="1"/>
</dbReference>
<dbReference type="HAMAP" id="MF_01661">
    <property type="entry name" value="D_rib_pyranase"/>
    <property type="match status" value="1"/>
</dbReference>
<dbReference type="InterPro" id="IPR023064">
    <property type="entry name" value="D-ribose_pyranase"/>
</dbReference>
<dbReference type="InterPro" id="IPR023750">
    <property type="entry name" value="RbsD-like_sf"/>
</dbReference>
<dbReference type="InterPro" id="IPR007721">
    <property type="entry name" value="RbsD_FucU"/>
</dbReference>
<dbReference type="NCBIfam" id="NF008761">
    <property type="entry name" value="PRK11797.1"/>
    <property type="match status" value="1"/>
</dbReference>
<dbReference type="PANTHER" id="PTHR37831">
    <property type="entry name" value="D-RIBOSE PYRANASE"/>
    <property type="match status" value="1"/>
</dbReference>
<dbReference type="PANTHER" id="PTHR37831:SF1">
    <property type="entry name" value="D-RIBOSE PYRANASE"/>
    <property type="match status" value="1"/>
</dbReference>
<dbReference type="Pfam" id="PF05025">
    <property type="entry name" value="RbsD_FucU"/>
    <property type="match status" value="1"/>
</dbReference>
<dbReference type="SUPFAM" id="SSF102546">
    <property type="entry name" value="RbsD-like"/>
    <property type="match status" value="1"/>
</dbReference>
<reference key="1">
    <citation type="journal article" date="2009" name="J. Bacteriol.">
        <title>The genome of Thermosipho africanus TCF52B: lateral genetic connections to the Firmicutes and Archaea.</title>
        <authorList>
            <person name="Nesboe C.L."/>
            <person name="Bapteste E."/>
            <person name="Curtis B."/>
            <person name="Dahle H."/>
            <person name="Lopez P."/>
            <person name="Macleod D."/>
            <person name="Dlutek M."/>
            <person name="Bowman S."/>
            <person name="Zhaxybayeva O."/>
            <person name="Birkeland N.-K."/>
            <person name="Doolittle W.F."/>
        </authorList>
    </citation>
    <scope>NUCLEOTIDE SEQUENCE [LARGE SCALE GENOMIC DNA]</scope>
    <source>
        <strain>TCF52B</strain>
    </source>
</reference>
<organism>
    <name type="scientific">Thermosipho africanus (strain TCF52B)</name>
    <dbReference type="NCBI Taxonomy" id="484019"/>
    <lineage>
        <taxon>Bacteria</taxon>
        <taxon>Thermotogati</taxon>
        <taxon>Thermotogota</taxon>
        <taxon>Thermotogae</taxon>
        <taxon>Thermotogales</taxon>
        <taxon>Fervidobacteriaceae</taxon>
        <taxon>Thermosipho</taxon>
    </lineage>
</organism>
<gene>
    <name evidence="1" type="primary">rbsD</name>
    <name type="ordered locus">THA_669</name>
</gene>
<comment type="function">
    <text evidence="1">Catalyzes the interconversion of beta-pyran and beta-furan forms of D-ribose.</text>
</comment>
<comment type="catalytic activity">
    <reaction evidence="1">
        <text>beta-D-ribopyranose = beta-D-ribofuranose</text>
        <dbReference type="Rhea" id="RHEA:25432"/>
        <dbReference type="ChEBI" id="CHEBI:27476"/>
        <dbReference type="ChEBI" id="CHEBI:47002"/>
        <dbReference type="EC" id="5.4.99.62"/>
    </reaction>
</comment>
<comment type="pathway">
    <text evidence="1">Carbohydrate metabolism; D-ribose degradation; D-ribose 5-phosphate from beta-D-ribopyranose: step 1/2.</text>
</comment>
<comment type="subunit">
    <text evidence="1">Homodecamer.</text>
</comment>
<comment type="subcellular location">
    <subcellularLocation>
        <location evidence="1">Cytoplasm</location>
    </subcellularLocation>
</comment>
<comment type="similarity">
    <text evidence="1">Belongs to the RbsD / FucU family. RbsD subfamily.</text>
</comment>
<name>RBSD_THEAB</name>
<feature type="chain" id="PRO_1000187170" description="D-ribose pyranase">
    <location>
        <begin position="1"/>
        <end position="128"/>
    </location>
</feature>
<feature type="active site" description="Proton donor" evidence="1">
    <location>
        <position position="20"/>
    </location>
</feature>
<feature type="binding site" evidence="1">
    <location>
        <position position="28"/>
    </location>
    <ligand>
        <name>substrate</name>
    </ligand>
</feature>
<feature type="binding site" evidence="1">
    <location>
        <position position="95"/>
    </location>
    <ligand>
        <name>substrate</name>
    </ligand>
</feature>
<feature type="binding site" evidence="1">
    <location>
        <begin position="117"/>
        <end position="119"/>
    </location>
    <ligand>
        <name>substrate</name>
    </ligand>
</feature>
<evidence type="ECO:0000255" key="1">
    <source>
        <dbReference type="HAMAP-Rule" id="MF_01661"/>
    </source>
</evidence>
<keyword id="KW-0119">Carbohydrate metabolism</keyword>
<keyword id="KW-0963">Cytoplasm</keyword>
<keyword id="KW-0413">Isomerase</keyword>
<keyword id="KW-1185">Reference proteome</keyword>
<accession>B7IGD0</accession>
<sequence length="128" mass="14459">MKKTGIFNSEISRVIAKLGHKDKIAIVDLGFPIPSHVERIDIVLDFGRPTFEEVLKVILKELEVEQVILAHESSKKFEQIIKENIPRVEFLKISHEELKKLTNDVVAVIRTGDVVPYSNAILVSGVIF</sequence>
<proteinExistence type="inferred from homology"/>
<protein>
    <recommendedName>
        <fullName evidence="1">D-ribose pyranase</fullName>
        <ecNumber evidence="1">5.4.99.62</ecNumber>
    </recommendedName>
</protein>